<reference key="1">
    <citation type="submission" date="2008-02" db="EMBL/GenBank/DDBJ databases">
        <title>Complete sequence of Escherichia coli C str. ATCC 8739.</title>
        <authorList>
            <person name="Copeland A."/>
            <person name="Lucas S."/>
            <person name="Lapidus A."/>
            <person name="Glavina del Rio T."/>
            <person name="Dalin E."/>
            <person name="Tice H."/>
            <person name="Bruce D."/>
            <person name="Goodwin L."/>
            <person name="Pitluck S."/>
            <person name="Kiss H."/>
            <person name="Brettin T."/>
            <person name="Detter J.C."/>
            <person name="Han C."/>
            <person name="Kuske C.R."/>
            <person name="Schmutz J."/>
            <person name="Larimer F."/>
            <person name="Land M."/>
            <person name="Hauser L."/>
            <person name="Kyrpides N."/>
            <person name="Mikhailova N."/>
            <person name="Ingram L."/>
            <person name="Richardson P."/>
        </authorList>
    </citation>
    <scope>NUCLEOTIDE SEQUENCE [LARGE SCALE GENOMIC DNA]</scope>
    <source>
        <strain>ATCC 8739 / DSM 1576 / NBRC 3972 / NCIMB 8545 / WDCM 00012 / Crooks</strain>
    </source>
</reference>
<organism>
    <name type="scientific">Escherichia coli (strain ATCC 8739 / DSM 1576 / NBRC 3972 / NCIMB 8545 / WDCM 00012 / Crooks)</name>
    <dbReference type="NCBI Taxonomy" id="481805"/>
    <lineage>
        <taxon>Bacteria</taxon>
        <taxon>Pseudomonadati</taxon>
        <taxon>Pseudomonadota</taxon>
        <taxon>Gammaproteobacteria</taxon>
        <taxon>Enterobacterales</taxon>
        <taxon>Enterobacteriaceae</taxon>
        <taxon>Escherichia</taxon>
    </lineage>
</organism>
<keyword id="KW-0456">Lyase</keyword>
<keyword id="KW-0479">Metal-binding</keyword>
<keyword id="KW-0862">Zinc</keyword>
<sequence length="286" mass="31294">MSIISTKYLLQDAQANGYAVPAFNIHNAETIQAILEVCSEMRSPVILAGTPGTFKHIALEEIYALCSAYSTTYNMPLALHLDHHESLDDIRRKVHAGVRSAMIDGSHFPFAENVKLVKSVVDFCHSQDCSVEAELGRLGGVEDDMSVDAESAFLTDPQEAKRFVELTGVDSLAVAIGTAHGLYSKTPKIDFQRLAEIREVVDVPLVLHGASDVPDEFVRRTIELGVTKVNVATELKIAFAGAVKAWFAENPQGNDPRYYMRVGMDAMKEVVRNKINVCGSANRISA</sequence>
<feature type="chain" id="PRO_0000355321" description="D-tagatose-1,6-bisphosphate aldolase subunit KbaY">
    <location>
        <begin position="1"/>
        <end position="286"/>
    </location>
</feature>
<feature type="active site" description="Proton donor" evidence="1">
    <location>
        <position position="82"/>
    </location>
</feature>
<feature type="binding site" evidence="1">
    <location>
        <position position="83"/>
    </location>
    <ligand>
        <name>Zn(2+)</name>
        <dbReference type="ChEBI" id="CHEBI:29105"/>
        <note>catalytic</note>
    </ligand>
</feature>
<feature type="binding site" evidence="1">
    <location>
        <position position="180"/>
    </location>
    <ligand>
        <name>Zn(2+)</name>
        <dbReference type="ChEBI" id="CHEBI:29105"/>
        <note>catalytic</note>
    </ligand>
</feature>
<feature type="binding site" evidence="1">
    <location>
        <position position="181"/>
    </location>
    <ligand>
        <name>dihydroxyacetone phosphate</name>
        <dbReference type="ChEBI" id="CHEBI:57642"/>
    </ligand>
</feature>
<feature type="binding site" evidence="1">
    <location>
        <position position="208"/>
    </location>
    <ligand>
        <name>Zn(2+)</name>
        <dbReference type="ChEBI" id="CHEBI:29105"/>
        <note>catalytic</note>
    </ligand>
</feature>
<feature type="binding site" evidence="1">
    <location>
        <begin position="209"/>
        <end position="211"/>
    </location>
    <ligand>
        <name>dihydroxyacetone phosphate</name>
        <dbReference type="ChEBI" id="CHEBI:57642"/>
    </ligand>
</feature>
<feature type="binding site" evidence="1">
    <location>
        <begin position="230"/>
        <end position="233"/>
    </location>
    <ligand>
        <name>dihydroxyacetone phosphate</name>
        <dbReference type="ChEBI" id="CHEBI:57642"/>
    </ligand>
</feature>
<evidence type="ECO:0000255" key="1">
    <source>
        <dbReference type="HAMAP-Rule" id="MF_01293"/>
    </source>
</evidence>
<protein>
    <recommendedName>
        <fullName evidence="1">D-tagatose-1,6-bisphosphate aldolase subunit KbaY</fullName>
        <shortName evidence="1">TBPA</shortName>
        <shortName evidence="1">TagBP aldolase</shortName>
        <ecNumber evidence="1">4.1.2.40</ecNumber>
    </recommendedName>
    <alternativeName>
        <fullName evidence="1">D-tagatose-bisphosphate aldolase class II</fullName>
    </alternativeName>
    <alternativeName>
        <fullName evidence="1">Ketose 1,6-bisphosphate aldolase class II</fullName>
    </alternativeName>
    <alternativeName>
        <fullName evidence="1">Tagatose-bisphosphate aldolase</fullName>
    </alternativeName>
</protein>
<gene>
    <name evidence="1" type="primary">kbaY</name>
    <name type="ordered locus">EcolC_0561</name>
</gene>
<name>KBAY_ECOLC</name>
<dbReference type="EC" id="4.1.2.40" evidence="1"/>
<dbReference type="EMBL" id="CP000946">
    <property type="protein sequence ID" value="ACA76238.1"/>
    <property type="molecule type" value="Genomic_DNA"/>
</dbReference>
<dbReference type="RefSeq" id="WP_000022766.1">
    <property type="nucleotide sequence ID" value="NZ_MTFT01000027.1"/>
</dbReference>
<dbReference type="SMR" id="B1IRH9"/>
<dbReference type="GeneID" id="75203745"/>
<dbReference type="KEGG" id="ecl:EcolC_0561"/>
<dbReference type="HOGENOM" id="CLU_040088_0_1_6"/>
<dbReference type="UniPathway" id="UPA00704">
    <property type="reaction ID" value="UER00716"/>
</dbReference>
<dbReference type="GO" id="GO:0005829">
    <property type="term" value="C:cytosol"/>
    <property type="evidence" value="ECO:0007669"/>
    <property type="project" value="TreeGrafter"/>
</dbReference>
<dbReference type="GO" id="GO:0009025">
    <property type="term" value="F:tagatose-bisphosphate aldolase activity"/>
    <property type="evidence" value="ECO:0007669"/>
    <property type="project" value="UniProtKB-UniRule"/>
</dbReference>
<dbReference type="GO" id="GO:0008270">
    <property type="term" value="F:zinc ion binding"/>
    <property type="evidence" value="ECO:0007669"/>
    <property type="project" value="UniProtKB-UniRule"/>
</dbReference>
<dbReference type="GO" id="GO:0005975">
    <property type="term" value="P:carbohydrate metabolic process"/>
    <property type="evidence" value="ECO:0007669"/>
    <property type="project" value="InterPro"/>
</dbReference>
<dbReference type="GO" id="GO:2001059">
    <property type="term" value="P:D-tagatose 6-phosphate catabolic process"/>
    <property type="evidence" value="ECO:0007669"/>
    <property type="project" value="UniProtKB-UniRule"/>
</dbReference>
<dbReference type="CDD" id="cd00453">
    <property type="entry name" value="FTBP_aldolase_II"/>
    <property type="match status" value="1"/>
</dbReference>
<dbReference type="FunFam" id="3.20.20.70:FF:000043">
    <property type="entry name" value="D-tagatose-1,6-bisphosphate aldolase subunit GatY"/>
    <property type="match status" value="1"/>
</dbReference>
<dbReference type="Gene3D" id="3.20.20.70">
    <property type="entry name" value="Aldolase class I"/>
    <property type="match status" value="1"/>
</dbReference>
<dbReference type="HAMAP" id="MF_01293">
    <property type="entry name" value="TagBP_aldolase_KbaY"/>
    <property type="match status" value="1"/>
</dbReference>
<dbReference type="InterPro" id="IPR013785">
    <property type="entry name" value="Aldolase_TIM"/>
</dbReference>
<dbReference type="InterPro" id="IPR050246">
    <property type="entry name" value="Class_II_FBP_aldolase"/>
</dbReference>
<dbReference type="InterPro" id="IPR000771">
    <property type="entry name" value="FBA_II"/>
</dbReference>
<dbReference type="InterPro" id="IPR023788">
    <property type="entry name" value="TagBP_ald_KbaY"/>
</dbReference>
<dbReference type="InterPro" id="IPR011288">
    <property type="entry name" value="TagBP_ald_KbaY/GatY"/>
</dbReference>
<dbReference type="NCBIfam" id="TIGR00167">
    <property type="entry name" value="cbbA"/>
    <property type="match status" value="1"/>
</dbReference>
<dbReference type="NCBIfam" id="NF006626">
    <property type="entry name" value="PRK09195.1"/>
    <property type="match status" value="1"/>
</dbReference>
<dbReference type="NCBIfam" id="NF009374">
    <property type="entry name" value="PRK12737.1"/>
    <property type="match status" value="1"/>
</dbReference>
<dbReference type="NCBIfam" id="NF009375">
    <property type="entry name" value="PRK12738.1"/>
    <property type="match status" value="1"/>
</dbReference>
<dbReference type="NCBIfam" id="TIGR01858">
    <property type="entry name" value="tag_bisphos_ald"/>
    <property type="match status" value="1"/>
</dbReference>
<dbReference type="PANTHER" id="PTHR30304">
    <property type="entry name" value="D-TAGATOSE-1,6-BISPHOSPHATE ALDOLASE"/>
    <property type="match status" value="1"/>
</dbReference>
<dbReference type="PANTHER" id="PTHR30304:SF0">
    <property type="entry name" value="D-TAGATOSE-1,6-BISPHOSPHATE ALDOLASE SUBUNIT GATY-RELATED"/>
    <property type="match status" value="1"/>
</dbReference>
<dbReference type="Pfam" id="PF01116">
    <property type="entry name" value="F_bP_aldolase"/>
    <property type="match status" value="1"/>
</dbReference>
<dbReference type="PIRSF" id="PIRSF001359">
    <property type="entry name" value="F_bP_aldolase_II"/>
    <property type="match status" value="1"/>
</dbReference>
<dbReference type="SUPFAM" id="SSF51569">
    <property type="entry name" value="Aldolase"/>
    <property type="match status" value="1"/>
</dbReference>
<dbReference type="PROSITE" id="PS00602">
    <property type="entry name" value="ALDOLASE_CLASS_II_1"/>
    <property type="match status" value="1"/>
</dbReference>
<dbReference type="PROSITE" id="PS00806">
    <property type="entry name" value="ALDOLASE_CLASS_II_2"/>
    <property type="match status" value="1"/>
</dbReference>
<proteinExistence type="inferred from homology"/>
<comment type="function">
    <text evidence="1">Catalytic subunit of the tagatose-1,6-bisphosphate aldolase KbaYZ, which catalyzes the reversible aldol condensation of dihydroxyacetone phosphate (DHAP or glycerone-phosphate) with glyceraldehyde 3-phosphate (G3P) to produce tagatose 1,6-bisphosphate (TBP). Requires KbaZ subunit for full activity and stability.</text>
</comment>
<comment type="catalytic activity">
    <reaction evidence="1">
        <text>D-tagatofuranose 1,6-bisphosphate = D-glyceraldehyde 3-phosphate + dihydroxyacetone phosphate</text>
        <dbReference type="Rhea" id="RHEA:22948"/>
        <dbReference type="ChEBI" id="CHEBI:57642"/>
        <dbReference type="ChEBI" id="CHEBI:58694"/>
        <dbReference type="ChEBI" id="CHEBI:59776"/>
        <dbReference type="EC" id="4.1.2.40"/>
    </reaction>
</comment>
<comment type="cofactor">
    <cofactor evidence="1">
        <name>Zn(2+)</name>
        <dbReference type="ChEBI" id="CHEBI:29105"/>
    </cofactor>
    <text evidence="1">Binds 1 zinc ion per subunit.</text>
</comment>
<comment type="pathway">
    <text evidence="1">Carbohydrate metabolism; D-tagatose 6-phosphate degradation; D-glyceraldehyde 3-phosphate and glycerone phosphate from D-tagatose 6-phosphate: step 2/2.</text>
</comment>
<comment type="subunit">
    <text evidence="1">Homotetramer. Forms a complex with KbaZ.</text>
</comment>
<comment type="similarity">
    <text evidence="1">Belongs to the class II fructose-bisphosphate aldolase family. TagBP aldolase KbaY subfamily.</text>
</comment>
<accession>B1IRH9</accession>